<gene>
    <name evidence="1" type="primary">hutU</name>
    <name type="ordered locus">YPN_3665</name>
    <name type="ORF">YP516_4163</name>
</gene>
<organism>
    <name type="scientific">Yersinia pestis bv. Antiqua (strain Nepal516)</name>
    <dbReference type="NCBI Taxonomy" id="377628"/>
    <lineage>
        <taxon>Bacteria</taxon>
        <taxon>Pseudomonadati</taxon>
        <taxon>Pseudomonadota</taxon>
        <taxon>Gammaproteobacteria</taxon>
        <taxon>Enterobacterales</taxon>
        <taxon>Yersiniaceae</taxon>
        <taxon>Yersinia</taxon>
    </lineage>
</organism>
<evidence type="ECO:0000255" key="1">
    <source>
        <dbReference type="HAMAP-Rule" id="MF_00577"/>
    </source>
</evidence>
<dbReference type="EC" id="4.2.1.49" evidence="1"/>
<dbReference type="EMBL" id="CP000305">
    <property type="protein sequence ID" value="ABG19992.1"/>
    <property type="molecule type" value="Genomic_DNA"/>
</dbReference>
<dbReference type="EMBL" id="ACNQ01000019">
    <property type="protein sequence ID" value="EEO74562.1"/>
    <property type="molecule type" value="Genomic_DNA"/>
</dbReference>
<dbReference type="RefSeq" id="WP_002209576.1">
    <property type="nucleotide sequence ID" value="NZ_ACNQ01000019.1"/>
</dbReference>
<dbReference type="SMR" id="Q1CDD8"/>
<dbReference type="GeneID" id="57974694"/>
<dbReference type="KEGG" id="ypn:YPN_3665"/>
<dbReference type="HOGENOM" id="CLU_018868_0_1_6"/>
<dbReference type="UniPathway" id="UPA00379">
    <property type="reaction ID" value="UER00550"/>
</dbReference>
<dbReference type="Proteomes" id="UP000008936">
    <property type="component" value="Chromosome"/>
</dbReference>
<dbReference type="GO" id="GO:0005737">
    <property type="term" value="C:cytoplasm"/>
    <property type="evidence" value="ECO:0007669"/>
    <property type="project" value="UniProtKB-SubCell"/>
</dbReference>
<dbReference type="GO" id="GO:0016153">
    <property type="term" value="F:urocanate hydratase activity"/>
    <property type="evidence" value="ECO:0007669"/>
    <property type="project" value="UniProtKB-UniRule"/>
</dbReference>
<dbReference type="GO" id="GO:0019556">
    <property type="term" value="P:L-histidine catabolic process to glutamate and formamide"/>
    <property type="evidence" value="ECO:0007669"/>
    <property type="project" value="UniProtKB-UniPathway"/>
</dbReference>
<dbReference type="GO" id="GO:0019557">
    <property type="term" value="P:L-histidine catabolic process to glutamate and formate"/>
    <property type="evidence" value="ECO:0007669"/>
    <property type="project" value="UniProtKB-UniPathway"/>
</dbReference>
<dbReference type="FunFam" id="3.40.50.10730:FF:000001">
    <property type="entry name" value="Urocanate hydratase"/>
    <property type="match status" value="1"/>
</dbReference>
<dbReference type="Gene3D" id="3.40.50.10730">
    <property type="entry name" value="Urocanase like domains"/>
    <property type="match status" value="1"/>
</dbReference>
<dbReference type="Gene3D" id="3.40.1770.10">
    <property type="entry name" value="Urocanase superfamily"/>
    <property type="match status" value="1"/>
</dbReference>
<dbReference type="HAMAP" id="MF_00577">
    <property type="entry name" value="HutU"/>
    <property type="match status" value="1"/>
</dbReference>
<dbReference type="InterPro" id="IPR055351">
    <property type="entry name" value="Urocanase"/>
</dbReference>
<dbReference type="InterPro" id="IPR023637">
    <property type="entry name" value="Urocanase-like"/>
</dbReference>
<dbReference type="InterPro" id="IPR035401">
    <property type="entry name" value="Urocanase_C"/>
</dbReference>
<dbReference type="InterPro" id="IPR038364">
    <property type="entry name" value="Urocanase_central_sf"/>
</dbReference>
<dbReference type="InterPro" id="IPR023636">
    <property type="entry name" value="Urocanase_CS"/>
</dbReference>
<dbReference type="InterPro" id="IPR035400">
    <property type="entry name" value="Urocanase_N"/>
</dbReference>
<dbReference type="InterPro" id="IPR035085">
    <property type="entry name" value="Urocanase_Rossmann-like"/>
</dbReference>
<dbReference type="InterPro" id="IPR036190">
    <property type="entry name" value="Urocanase_sf"/>
</dbReference>
<dbReference type="NCBIfam" id="TIGR01228">
    <property type="entry name" value="hutU"/>
    <property type="match status" value="1"/>
</dbReference>
<dbReference type="NCBIfam" id="NF003820">
    <property type="entry name" value="PRK05414.1"/>
    <property type="match status" value="1"/>
</dbReference>
<dbReference type="PANTHER" id="PTHR12216">
    <property type="entry name" value="UROCANATE HYDRATASE"/>
    <property type="match status" value="1"/>
</dbReference>
<dbReference type="PANTHER" id="PTHR12216:SF4">
    <property type="entry name" value="UROCANATE HYDRATASE"/>
    <property type="match status" value="1"/>
</dbReference>
<dbReference type="Pfam" id="PF01175">
    <property type="entry name" value="Urocanase"/>
    <property type="match status" value="1"/>
</dbReference>
<dbReference type="Pfam" id="PF17392">
    <property type="entry name" value="Urocanase_C"/>
    <property type="match status" value="1"/>
</dbReference>
<dbReference type="Pfam" id="PF17391">
    <property type="entry name" value="Urocanase_N"/>
    <property type="match status" value="1"/>
</dbReference>
<dbReference type="PIRSF" id="PIRSF001423">
    <property type="entry name" value="Urocanate_hydrat"/>
    <property type="match status" value="1"/>
</dbReference>
<dbReference type="SUPFAM" id="SSF111326">
    <property type="entry name" value="Urocanase"/>
    <property type="match status" value="1"/>
</dbReference>
<dbReference type="PROSITE" id="PS01233">
    <property type="entry name" value="UROCANASE"/>
    <property type="match status" value="1"/>
</dbReference>
<feature type="chain" id="PRO_1000025164" description="Urocanate hydratase">
    <location>
        <begin position="1"/>
        <end position="563"/>
    </location>
</feature>
<feature type="active site" evidence="1">
    <location>
        <position position="411"/>
    </location>
</feature>
<feature type="binding site" evidence="1">
    <location>
        <begin position="53"/>
        <end position="54"/>
    </location>
    <ligand>
        <name>NAD(+)</name>
        <dbReference type="ChEBI" id="CHEBI:57540"/>
    </ligand>
</feature>
<feature type="binding site" evidence="1">
    <location>
        <position position="131"/>
    </location>
    <ligand>
        <name>NAD(+)</name>
        <dbReference type="ChEBI" id="CHEBI:57540"/>
    </ligand>
</feature>
<feature type="binding site" evidence="1">
    <location>
        <begin position="177"/>
        <end position="179"/>
    </location>
    <ligand>
        <name>NAD(+)</name>
        <dbReference type="ChEBI" id="CHEBI:57540"/>
    </ligand>
</feature>
<feature type="binding site" evidence="1">
    <location>
        <position position="197"/>
    </location>
    <ligand>
        <name>NAD(+)</name>
        <dbReference type="ChEBI" id="CHEBI:57540"/>
    </ligand>
</feature>
<feature type="binding site" evidence="1">
    <location>
        <position position="202"/>
    </location>
    <ligand>
        <name>NAD(+)</name>
        <dbReference type="ChEBI" id="CHEBI:57540"/>
    </ligand>
</feature>
<feature type="binding site" evidence="1">
    <location>
        <begin position="243"/>
        <end position="244"/>
    </location>
    <ligand>
        <name>NAD(+)</name>
        <dbReference type="ChEBI" id="CHEBI:57540"/>
    </ligand>
</feature>
<feature type="binding site" evidence="1">
    <location>
        <begin position="264"/>
        <end position="268"/>
    </location>
    <ligand>
        <name>NAD(+)</name>
        <dbReference type="ChEBI" id="CHEBI:57540"/>
    </ligand>
</feature>
<feature type="binding site" evidence="1">
    <location>
        <begin position="274"/>
        <end position="275"/>
    </location>
    <ligand>
        <name>NAD(+)</name>
        <dbReference type="ChEBI" id="CHEBI:57540"/>
    </ligand>
</feature>
<feature type="binding site" evidence="1">
    <location>
        <position position="323"/>
    </location>
    <ligand>
        <name>NAD(+)</name>
        <dbReference type="ChEBI" id="CHEBI:57540"/>
    </ligand>
</feature>
<feature type="binding site" evidence="1">
    <location>
        <position position="493"/>
    </location>
    <ligand>
        <name>NAD(+)</name>
        <dbReference type="ChEBI" id="CHEBI:57540"/>
    </ligand>
</feature>
<sequence>MTTQNRFRDNEIRAPQGTQLTAKSWLTEAALRMLMNNLDPDVAENPKELVVYGGIGRAARNWECYDKIVESLINLNDDETLLIQSGKPVGIFKTHSNAPRVLIANSNLVPHWANWEHFNELDAKGLAMYGQMTAGSWIYIGSQGIVQGTYETFVEAGRQHFGGSLKGRWVLTAGLGGMGGAQPLAATLAGACSLNIECQQSRIDFRLKTRYVDEQATDLDDALARIEKYTATGVAVSIALCGNAAEILPELVRRGVRPDMVTDQTSAHDPLNGYLPKGWNWEEYRQRAQHEPALVINAAKISMAEHVEAMLAFHNMGIPTFDYGNNIRQMAHDMGVIRAFDFPGFVPAYIRPLFCRGIGPFRWVALSGNPDDIYKTDAKVKALIPDDAHLHHWLDMARERIRFQGLPARICWVGLGQRAKLGLAFNEMVRSGELSAPVVIGRDHLDSGSVASPNRETEAMQDGSDAVSDWPLLNALLNTASGATWVSLHHGGGVGMGFSQHSGMVVVCDGSDEAAERIARVLHNDPATGVMRHADAGYDIAVNCAQEQGLNLPMVAATQGKKS</sequence>
<comment type="function">
    <text evidence="1">Catalyzes the conversion of urocanate to 4-imidazolone-5-propionate.</text>
</comment>
<comment type="catalytic activity">
    <reaction evidence="1">
        <text>4-imidazolone-5-propanoate = trans-urocanate + H2O</text>
        <dbReference type="Rhea" id="RHEA:13101"/>
        <dbReference type="ChEBI" id="CHEBI:15377"/>
        <dbReference type="ChEBI" id="CHEBI:17771"/>
        <dbReference type="ChEBI" id="CHEBI:77893"/>
        <dbReference type="EC" id="4.2.1.49"/>
    </reaction>
</comment>
<comment type="cofactor">
    <cofactor evidence="1">
        <name>NAD(+)</name>
        <dbReference type="ChEBI" id="CHEBI:57540"/>
    </cofactor>
    <text evidence="1">Binds 1 NAD(+) per subunit.</text>
</comment>
<comment type="pathway">
    <text evidence="1">Amino-acid degradation; L-histidine degradation into L-glutamate; N-formimidoyl-L-glutamate from L-histidine: step 2/3.</text>
</comment>
<comment type="subcellular location">
    <subcellularLocation>
        <location evidence="1">Cytoplasm</location>
    </subcellularLocation>
</comment>
<comment type="similarity">
    <text evidence="1">Belongs to the urocanase family.</text>
</comment>
<proteinExistence type="inferred from homology"/>
<accession>Q1CDD8</accession>
<accession>D1Q209</accession>
<protein>
    <recommendedName>
        <fullName evidence="1">Urocanate hydratase</fullName>
        <shortName evidence="1">Urocanase</shortName>
        <ecNumber evidence="1">4.2.1.49</ecNumber>
    </recommendedName>
    <alternativeName>
        <fullName evidence="1">Imidazolonepropionate hydrolase</fullName>
    </alternativeName>
</protein>
<name>HUTU_YERPN</name>
<reference key="1">
    <citation type="journal article" date="2006" name="J. Bacteriol.">
        <title>Complete genome sequence of Yersinia pestis strains Antiqua and Nepal516: evidence of gene reduction in an emerging pathogen.</title>
        <authorList>
            <person name="Chain P.S.G."/>
            <person name="Hu P."/>
            <person name="Malfatti S.A."/>
            <person name="Radnedge L."/>
            <person name="Larimer F."/>
            <person name="Vergez L.M."/>
            <person name="Worsham P."/>
            <person name="Chu M.C."/>
            <person name="Andersen G.L."/>
        </authorList>
    </citation>
    <scope>NUCLEOTIDE SEQUENCE [LARGE SCALE GENOMIC DNA]</scope>
    <source>
        <strain>Nepal516</strain>
    </source>
</reference>
<reference key="2">
    <citation type="submission" date="2009-04" db="EMBL/GenBank/DDBJ databases">
        <title>Yersinia pestis Nepal516A whole genome shotgun sequencing project.</title>
        <authorList>
            <person name="Plunkett G. III"/>
            <person name="Anderson B.D."/>
            <person name="Baumler D.J."/>
            <person name="Burland V."/>
            <person name="Cabot E.L."/>
            <person name="Glasner J.D."/>
            <person name="Mau B."/>
            <person name="Neeno-Eckwall E."/>
            <person name="Perna N.T."/>
            <person name="Munk A.C."/>
            <person name="Tapia R."/>
            <person name="Green L.D."/>
            <person name="Rogers Y.C."/>
            <person name="Detter J.C."/>
            <person name="Bruce D.C."/>
            <person name="Brettin T.S."/>
        </authorList>
    </citation>
    <scope>NUCLEOTIDE SEQUENCE [LARGE SCALE GENOMIC DNA]</scope>
    <source>
        <strain>Nepal516</strain>
    </source>
</reference>
<keyword id="KW-0963">Cytoplasm</keyword>
<keyword id="KW-0369">Histidine metabolism</keyword>
<keyword id="KW-0456">Lyase</keyword>
<keyword id="KW-0520">NAD</keyword>